<feature type="chain" id="PRO_0000151929" description="ATP phosphoribosyltransferase">
    <location>
        <begin position="1"/>
        <end position="231"/>
    </location>
</feature>
<keyword id="KW-0028">Amino-acid biosynthesis</keyword>
<keyword id="KW-0067">ATP-binding</keyword>
<keyword id="KW-0963">Cytoplasm</keyword>
<keyword id="KW-0328">Glycosyltransferase</keyword>
<keyword id="KW-0368">Histidine biosynthesis</keyword>
<keyword id="KW-0547">Nucleotide-binding</keyword>
<keyword id="KW-1185">Reference proteome</keyword>
<keyword id="KW-0808">Transferase</keyword>
<comment type="function">
    <text evidence="1">Catalyzes the condensation of ATP and 5-phosphoribose 1-diphosphate to form N'-(5'-phosphoribosyl)-ATP (PR-ATP). Has a crucial role in the pathway because the rate of histidine biosynthesis seems to be controlled primarily by regulation of HisG enzymatic activity (By similarity).</text>
</comment>
<comment type="catalytic activity">
    <reaction>
        <text>1-(5-phospho-beta-D-ribosyl)-ATP + diphosphate = 5-phospho-alpha-D-ribose 1-diphosphate + ATP</text>
        <dbReference type="Rhea" id="RHEA:18473"/>
        <dbReference type="ChEBI" id="CHEBI:30616"/>
        <dbReference type="ChEBI" id="CHEBI:33019"/>
        <dbReference type="ChEBI" id="CHEBI:58017"/>
        <dbReference type="ChEBI" id="CHEBI:73183"/>
        <dbReference type="EC" id="2.4.2.17"/>
    </reaction>
</comment>
<comment type="pathway">
    <text>Amino-acid biosynthesis; L-histidine biosynthesis; L-histidine from 5-phospho-alpha-D-ribose 1-diphosphate: step 1/9.</text>
</comment>
<comment type="subunit">
    <text evidence="1">Heteromultimer composed of HisG and HisZ subunits.</text>
</comment>
<comment type="subcellular location">
    <subcellularLocation>
        <location evidence="1">Cytoplasm</location>
    </subcellularLocation>
</comment>
<comment type="domain">
    <text>Lacks the C-terminal regulatory region which is replaced by HisZ.</text>
</comment>
<comment type="similarity">
    <text evidence="2">Belongs to the ATP phosphoribosyltransferase family. Short subfamily.</text>
</comment>
<accession>Q92RR6</accession>
<name>HIS1_RHIME</name>
<organism>
    <name type="scientific">Rhizobium meliloti (strain 1021)</name>
    <name type="common">Ensifer meliloti</name>
    <name type="synonym">Sinorhizobium meliloti</name>
    <dbReference type="NCBI Taxonomy" id="266834"/>
    <lineage>
        <taxon>Bacteria</taxon>
        <taxon>Pseudomonadati</taxon>
        <taxon>Pseudomonadota</taxon>
        <taxon>Alphaproteobacteria</taxon>
        <taxon>Hyphomicrobiales</taxon>
        <taxon>Rhizobiaceae</taxon>
        <taxon>Sinorhizobium/Ensifer group</taxon>
        <taxon>Sinorhizobium</taxon>
    </lineage>
</organism>
<dbReference type="EC" id="2.4.2.17"/>
<dbReference type="EMBL" id="AL591688">
    <property type="protein sequence ID" value="CAC45360.1"/>
    <property type="molecule type" value="Genomic_DNA"/>
</dbReference>
<dbReference type="RefSeq" id="NP_384894.1">
    <property type="nucleotide sequence ID" value="NC_003047.1"/>
</dbReference>
<dbReference type="RefSeq" id="WP_010968819.1">
    <property type="nucleotide sequence ID" value="NC_003047.1"/>
</dbReference>
<dbReference type="SMR" id="Q92RR6"/>
<dbReference type="EnsemblBacteria" id="CAC45360">
    <property type="protein sequence ID" value="CAC45360"/>
    <property type="gene ID" value="SMc00917"/>
</dbReference>
<dbReference type="KEGG" id="sme:SMc00917"/>
<dbReference type="PATRIC" id="fig|266834.11.peg.2175"/>
<dbReference type="eggNOG" id="COG0040">
    <property type="taxonomic scope" value="Bacteria"/>
</dbReference>
<dbReference type="HOGENOM" id="CLU_038115_0_1_5"/>
<dbReference type="OrthoDB" id="9806435at2"/>
<dbReference type="UniPathway" id="UPA00031">
    <property type="reaction ID" value="UER00006"/>
</dbReference>
<dbReference type="Proteomes" id="UP000001976">
    <property type="component" value="Chromosome"/>
</dbReference>
<dbReference type="GO" id="GO:0005737">
    <property type="term" value="C:cytoplasm"/>
    <property type="evidence" value="ECO:0007669"/>
    <property type="project" value="UniProtKB-SubCell"/>
</dbReference>
<dbReference type="GO" id="GO:0005524">
    <property type="term" value="F:ATP binding"/>
    <property type="evidence" value="ECO:0007669"/>
    <property type="project" value="UniProtKB-KW"/>
</dbReference>
<dbReference type="GO" id="GO:0003879">
    <property type="term" value="F:ATP phosphoribosyltransferase activity"/>
    <property type="evidence" value="ECO:0007669"/>
    <property type="project" value="UniProtKB-UniRule"/>
</dbReference>
<dbReference type="GO" id="GO:0000105">
    <property type="term" value="P:L-histidine biosynthetic process"/>
    <property type="evidence" value="ECO:0007669"/>
    <property type="project" value="UniProtKB-UniRule"/>
</dbReference>
<dbReference type="Gene3D" id="3.40.190.10">
    <property type="entry name" value="Periplasmic binding protein-like II"/>
    <property type="match status" value="2"/>
</dbReference>
<dbReference type="HAMAP" id="MF_01018">
    <property type="entry name" value="HisG_Short"/>
    <property type="match status" value="1"/>
</dbReference>
<dbReference type="InterPro" id="IPR013820">
    <property type="entry name" value="ATP_PRibTrfase_cat"/>
</dbReference>
<dbReference type="InterPro" id="IPR018198">
    <property type="entry name" value="ATP_PRibTrfase_CS"/>
</dbReference>
<dbReference type="InterPro" id="IPR001348">
    <property type="entry name" value="ATP_PRibTrfase_HisG"/>
</dbReference>
<dbReference type="InterPro" id="IPR024893">
    <property type="entry name" value="ATP_PRibTrfase_HisG_short"/>
</dbReference>
<dbReference type="NCBIfam" id="TIGR00070">
    <property type="entry name" value="hisG"/>
    <property type="match status" value="1"/>
</dbReference>
<dbReference type="PANTHER" id="PTHR21403:SF8">
    <property type="entry name" value="ATP PHOSPHORIBOSYLTRANSFERASE"/>
    <property type="match status" value="1"/>
</dbReference>
<dbReference type="PANTHER" id="PTHR21403">
    <property type="entry name" value="ATP PHOSPHORIBOSYLTRANSFERASE ATP-PRTASE"/>
    <property type="match status" value="1"/>
</dbReference>
<dbReference type="Pfam" id="PF01634">
    <property type="entry name" value="HisG"/>
    <property type="match status" value="1"/>
</dbReference>
<dbReference type="SUPFAM" id="SSF53850">
    <property type="entry name" value="Periplasmic binding protein-like II"/>
    <property type="match status" value="1"/>
</dbReference>
<dbReference type="PROSITE" id="PS01316">
    <property type="entry name" value="ATP_P_PHORIBOSYLTR"/>
    <property type="match status" value="1"/>
</dbReference>
<protein>
    <recommendedName>
        <fullName>ATP phosphoribosyltransferase</fullName>
        <shortName>ATP-PRT</shortName>
        <shortName>ATP-PRTase</shortName>
        <ecNumber>2.4.2.17</ecNumber>
    </recommendedName>
</protein>
<reference key="1">
    <citation type="journal article" date="2001" name="Proc. Natl. Acad. Sci. U.S.A.">
        <title>Analysis of the chromosome sequence of the legume symbiont Sinorhizobium meliloti strain 1021.</title>
        <authorList>
            <person name="Capela D."/>
            <person name="Barloy-Hubler F."/>
            <person name="Gouzy J."/>
            <person name="Bothe G."/>
            <person name="Ampe F."/>
            <person name="Batut J."/>
            <person name="Boistard P."/>
            <person name="Becker A."/>
            <person name="Boutry M."/>
            <person name="Cadieu E."/>
            <person name="Dreano S."/>
            <person name="Gloux S."/>
            <person name="Godrie T."/>
            <person name="Goffeau A."/>
            <person name="Kahn D."/>
            <person name="Kiss E."/>
            <person name="Lelaure V."/>
            <person name="Masuy D."/>
            <person name="Pohl T."/>
            <person name="Portetelle D."/>
            <person name="Puehler A."/>
            <person name="Purnelle B."/>
            <person name="Ramsperger U."/>
            <person name="Renard C."/>
            <person name="Thebault P."/>
            <person name="Vandenbol M."/>
            <person name="Weidner S."/>
            <person name="Galibert F."/>
        </authorList>
    </citation>
    <scope>NUCLEOTIDE SEQUENCE [LARGE SCALE GENOMIC DNA]</scope>
    <source>
        <strain>1021</strain>
    </source>
</reference>
<reference key="2">
    <citation type="journal article" date="2001" name="Science">
        <title>The composite genome of the legume symbiont Sinorhizobium meliloti.</title>
        <authorList>
            <person name="Galibert F."/>
            <person name="Finan T.M."/>
            <person name="Long S.R."/>
            <person name="Puehler A."/>
            <person name="Abola P."/>
            <person name="Ampe F."/>
            <person name="Barloy-Hubler F."/>
            <person name="Barnett M.J."/>
            <person name="Becker A."/>
            <person name="Boistard P."/>
            <person name="Bothe G."/>
            <person name="Boutry M."/>
            <person name="Bowser L."/>
            <person name="Buhrmester J."/>
            <person name="Cadieu E."/>
            <person name="Capela D."/>
            <person name="Chain P."/>
            <person name="Cowie A."/>
            <person name="Davis R.W."/>
            <person name="Dreano S."/>
            <person name="Federspiel N.A."/>
            <person name="Fisher R.F."/>
            <person name="Gloux S."/>
            <person name="Godrie T."/>
            <person name="Goffeau A."/>
            <person name="Golding B."/>
            <person name="Gouzy J."/>
            <person name="Gurjal M."/>
            <person name="Hernandez-Lucas I."/>
            <person name="Hong A."/>
            <person name="Huizar L."/>
            <person name="Hyman R.W."/>
            <person name="Jones T."/>
            <person name="Kahn D."/>
            <person name="Kahn M.L."/>
            <person name="Kalman S."/>
            <person name="Keating D.H."/>
            <person name="Kiss E."/>
            <person name="Komp C."/>
            <person name="Lelaure V."/>
            <person name="Masuy D."/>
            <person name="Palm C."/>
            <person name="Peck M.C."/>
            <person name="Pohl T.M."/>
            <person name="Portetelle D."/>
            <person name="Purnelle B."/>
            <person name="Ramsperger U."/>
            <person name="Surzycki R."/>
            <person name="Thebault P."/>
            <person name="Vandenbol M."/>
            <person name="Vorhoelter F.J."/>
            <person name="Weidner S."/>
            <person name="Wells D.H."/>
            <person name="Wong K."/>
            <person name="Yeh K.-C."/>
            <person name="Batut J."/>
        </authorList>
    </citation>
    <scope>NUCLEOTIDE SEQUENCE [LARGE SCALE GENOMIC DNA]</scope>
    <source>
        <strain>1021</strain>
    </source>
</reference>
<gene>
    <name type="primary">hisG</name>
    <name type="ordered locus">R00788</name>
    <name type="ORF">SMc00917</name>
</gene>
<evidence type="ECO:0000250" key="1"/>
<evidence type="ECO:0000305" key="2"/>
<sequence>MTVTIALPSKGRMKDEASAIFERAGMKIAAVGSDRSYRGRVEGWDDVEIAYLSASEIAREIGSGAVDFGVTGEDLVREGLADADARVDFAARLGFGHADVVVAVPEIWYDVDTMADLGDVAADFRARHGRRLAIATKYWRLTQQFFSGSHGIQLYRIVESLGATEGAPASGSADIIVDITSTGSTLKANHLKILSDGVILRSEACLVRARKATHEGNPVIDRIVAAVRAVL</sequence>
<proteinExistence type="inferred from homology"/>